<protein>
    <recommendedName>
        <fullName evidence="9">Carbonyl reductase [NADPH] 3</fullName>
        <ecNumber evidence="7">1.1.1.184</ecNumber>
    </recommendedName>
    <alternativeName>
        <fullName evidence="8">Monomeric carbonyl reductase 3</fullName>
    </alternativeName>
    <alternativeName>
        <fullName>Quinone reductase CBR3</fullName>
        <ecNumber evidence="2">1.6.5.10</ecNumber>
    </alternativeName>
</protein>
<keyword id="KW-0007">Acetylation</keyword>
<keyword id="KW-0963">Cytoplasm</keyword>
<keyword id="KW-0521">NADP</keyword>
<keyword id="KW-0560">Oxidoreductase</keyword>
<keyword id="KW-0597">Phosphoprotein</keyword>
<keyword id="KW-1185">Reference proteome</keyword>
<reference key="1">
    <citation type="journal article" date="2004" name="Nature">
        <title>Genome sequence of the Brown Norway rat yields insights into mammalian evolution.</title>
        <authorList>
            <person name="Gibbs R.A."/>
            <person name="Weinstock G.M."/>
            <person name="Metzker M.L."/>
            <person name="Muzny D.M."/>
            <person name="Sodergren E.J."/>
            <person name="Scherer S."/>
            <person name="Scott G."/>
            <person name="Steffen D."/>
            <person name="Worley K.C."/>
            <person name="Burch P.E."/>
            <person name="Okwuonu G."/>
            <person name="Hines S."/>
            <person name="Lewis L."/>
            <person name="Deramo C."/>
            <person name="Delgado O."/>
            <person name="Dugan-Rocha S."/>
            <person name="Miner G."/>
            <person name="Morgan M."/>
            <person name="Hawes A."/>
            <person name="Gill R."/>
            <person name="Holt R.A."/>
            <person name="Adams M.D."/>
            <person name="Amanatides P.G."/>
            <person name="Baden-Tillson H."/>
            <person name="Barnstead M."/>
            <person name="Chin S."/>
            <person name="Evans C.A."/>
            <person name="Ferriera S."/>
            <person name="Fosler C."/>
            <person name="Glodek A."/>
            <person name="Gu Z."/>
            <person name="Jennings D."/>
            <person name="Kraft C.L."/>
            <person name="Nguyen T."/>
            <person name="Pfannkoch C.M."/>
            <person name="Sitter C."/>
            <person name="Sutton G.G."/>
            <person name="Venter J.C."/>
            <person name="Woodage T."/>
            <person name="Smith D."/>
            <person name="Lee H.-M."/>
            <person name="Gustafson E."/>
            <person name="Cahill P."/>
            <person name="Kana A."/>
            <person name="Doucette-Stamm L."/>
            <person name="Weinstock K."/>
            <person name="Fechtel K."/>
            <person name="Weiss R.B."/>
            <person name="Dunn D.M."/>
            <person name="Green E.D."/>
            <person name="Blakesley R.W."/>
            <person name="Bouffard G.G."/>
            <person name="De Jong P.J."/>
            <person name="Osoegawa K."/>
            <person name="Zhu B."/>
            <person name="Marra M."/>
            <person name="Schein J."/>
            <person name="Bosdet I."/>
            <person name="Fjell C."/>
            <person name="Jones S."/>
            <person name="Krzywinski M."/>
            <person name="Mathewson C."/>
            <person name="Siddiqui A."/>
            <person name="Wye N."/>
            <person name="McPherson J."/>
            <person name="Zhao S."/>
            <person name="Fraser C.M."/>
            <person name="Shetty J."/>
            <person name="Shatsman S."/>
            <person name="Geer K."/>
            <person name="Chen Y."/>
            <person name="Abramzon S."/>
            <person name="Nierman W.C."/>
            <person name="Havlak P.H."/>
            <person name="Chen R."/>
            <person name="Durbin K.J."/>
            <person name="Egan A."/>
            <person name="Ren Y."/>
            <person name="Song X.-Z."/>
            <person name="Li B."/>
            <person name="Liu Y."/>
            <person name="Qin X."/>
            <person name="Cawley S."/>
            <person name="Cooney A.J."/>
            <person name="D'Souza L.M."/>
            <person name="Martin K."/>
            <person name="Wu J.Q."/>
            <person name="Gonzalez-Garay M.L."/>
            <person name="Jackson A.R."/>
            <person name="Kalafus K.J."/>
            <person name="McLeod M.P."/>
            <person name="Milosavljevic A."/>
            <person name="Virk D."/>
            <person name="Volkov A."/>
            <person name="Wheeler D.A."/>
            <person name="Zhang Z."/>
            <person name="Bailey J.A."/>
            <person name="Eichler E.E."/>
            <person name="Tuzun E."/>
            <person name="Birney E."/>
            <person name="Mongin E."/>
            <person name="Ureta-Vidal A."/>
            <person name="Woodwark C."/>
            <person name="Zdobnov E."/>
            <person name="Bork P."/>
            <person name="Suyama M."/>
            <person name="Torrents D."/>
            <person name="Alexandersson M."/>
            <person name="Trask B.J."/>
            <person name="Young J.M."/>
            <person name="Huang H."/>
            <person name="Wang H."/>
            <person name="Xing H."/>
            <person name="Daniels S."/>
            <person name="Gietzen D."/>
            <person name="Schmidt J."/>
            <person name="Stevens K."/>
            <person name="Vitt U."/>
            <person name="Wingrove J."/>
            <person name="Camara F."/>
            <person name="Mar Alba M."/>
            <person name="Abril J.F."/>
            <person name="Guigo R."/>
            <person name="Smit A."/>
            <person name="Dubchak I."/>
            <person name="Rubin E.M."/>
            <person name="Couronne O."/>
            <person name="Poliakov A."/>
            <person name="Huebner N."/>
            <person name="Ganten D."/>
            <person name="Goesele C."/>
            <person name="Hummel O."/>
            <person name="Kreitler T."/>
            <person name="Lee Y.-A."/>
            <person name="Monti J."/>
            <person name="Schulz H."/>
            <person name="Zimdahl H."/>
            <person name="Himmelbauer H."/>
            <person name="Lehrach H."/>
            <person name="Jacob H.J."/>
            <person name="Bromberg S."/>
            <person name="Gullings-Handley J."/>
            <person name="Jensen-Seaman M.I."/>
            <person name="Kwitek A.E."/>
            <person name="Lazar J."/>
            <person name="Pasko D."/>
            <person name="Tonellato P.J."/>
            <person name="Twigger S."/>
            <person name="Ponting C.P."/>
            <person name="Duarte J.M."/>
            <person name="Rice S."/>
            <person name="Goodstadt L."/>
            <person name="Beatson S.A."/>
            <person name="Emes R.D."/>
            <person name="Winter E.E."/>
            <person name="Webber C."/>
            <person name="Brandt P."/>
            <person name="Nyakatura G."/>
            <person name="Adetobi M."/>
            <person name="Chiaromonte F."/>
            <person name="Elnitski L."/>
            <person name="Eswara P."/>
            <person name="Hardison R.C."/>
            <person name="Hou M."/>
            <person name="Kolbe D."/>
            <person name="Makova K."/>
            <person name="Miller W."/>
            <person name="Nekrutenko A."/>
            <person name="Riemer C."/>
            <person name="Schwartz S."/>
            <person name="Taylor J."/>
            <person name="Yang S."/>
            <person name="Zhang Y."/>
            <person name="Lindpaintner K."/>
            <person name="Andrews T.D."/>
            <person name="Caccamo M."/>
            <person name="Clamp M."/>
            <person name="Clarke L."/>
            <person name="Curwen V."/>
            <person name="Durbin R.M."/>
            <person name="Eyras E."/>
            <person name="Searle S.M."/>
            <person name="Cooper G.M."/>
            <person name="Batzoglou S."/>
            <person name="Brudno M."/>
            <person name="Sidow A."/>
            <person name="Stone E.A."/>
            <person name="Payseur B.A."/>
            <person name="Bourque G."/>
            <person name="Lopez-Otin C."/>
            <person name="Puente X.S."/>
            <person name="Chakrabarti K."/>
            <person name="Chatterji S."/>
            <person name="Dewey C."/>
            <person name="Pachter L."/>
            <person name="Bray N."/>
            <person name="Yap V.B."/>
            <person name="Caspi A."/>
            <person name="Tesler G."/>
            <person name="Pevzner P.A."/>
            <person name="Haussler D."/>
            <person name="Roskin K.M."/>
            <person name="Baertsch R."/>
            <person name="Clawson H."/>
            <person name="Furey T.S."/>
            <person name="Hinrichs A.S."/>
            <person name="Karolchik D."/>
            <person name="Kent W.J."/>
            <person name="Rosenbloom K.R."/>
            <person name="Trumbower H."/>
            <person name="Weirauch M."/>
            <person name="Cooper D.N."/>
            <person name="Stenson P.D."/>
            <person name="Ma B."/>
            <person name="Brent M."/>
            <person name="Arumugam M."/>
            <person name="Shteynberg D."/>
            <person name="Copley R.R."/>
            <person name="Taylor M.S."/>
            <person name="Riethman H."/>
            <person name="Mudunuri U."/>
            <person name="Peterson J."/>
            <person name="Guyer M."/>
            <person name="Felsenfeld A."/>
            <person name="Old S."/>
            <person name="Mockrin S."/>
            <person name="Collins F.S."/>
        </authorList>
    </citation>
    <scope>NUCLEOTIDE SEQUENCE [LARGE SCALE GENOMIC DNA]</scope>
    <source>
        <strain>Brown Norway</strain>
    </source>
</reference>
<reference key="2">
    <citation type="submission" date="2005-07" db="EMBL/GenBank/DDBJ databases">
        <authorList>
            <person name="Mural R.J."/>
            <person name="Adams M.D."/>
            <person name="Myers E.W."/>
            <person name="Smith H.O."/>
            <person name="Venter J.C."/>
        </authorList>
    </citation>
    <scope>NUCLEOTIDE SEQUENCE [LARGE SCALE GENOMIC DNA]</scope>
</reference>
<reference key="3">
    <citation type="journal article" date="2004" name="Genome Res.">
        <title>The status, quality, and expansion of the NIH full-length cDNA project: the Mammalian Gene Collection (MGC).</title>
        <authorList>
            <consortium name="The MGC Project Team"/>
        </authorList>
    </citation>
    <scope>NUCLEOTIDE SEQUENCE [LARGE SCALE MRNA]</scope>
    <source>
        <tissue>Ovary</tissue>
    </source>
</reference>
<reference key="4">
    <citation type="journal article" date="2009" name="Chem. Biol. Interact.">
        <title>Investigation of the role of the amino acid residue at position 230 for catalysis in monomeric carbonyl reductase 3.</title>
        <authorList>
            <person name="Miura T."/>
            <person name="Itoh Y."/>
            <person name="Takada M."/>
            <person name="Tsutsui H."/>
            <person name="Yukimura T."/>
            <person name="Nishinaka T."/>
            <person name="Terada T."/>
        </authorList>
    </citation>
    <scope>FUNCTION</scope>
    <scope>CATALYTIC ACTIVITY</scope>
    <scope>MUTAGENESIS OF TRP-230</scope>
    <scope>BIOPHYSICOCHEMICAL PROPERTIES</scope>
</reference>
<proteinExistence type="evidence at protein level"/>
<dbReference type="EC" id="1.1.1.184" evidence="7"/>
<dbReference type="EC" id="1.6.5.10" evidence="2"/>
<dbReference type="EMBL" id="AABR07033657">
    <property type="status" value="NOT_ANNOTATED_CDS"/>
    <property type="molecule type" value="Genomic_DNA"/>
</dbReference>
<dbReference type="EMBL" id="CH474083">
    <property type="protein sequence ID" value="EDL76737.1"/>
    <property type="molecule type" value="Genomic_DNA"/>
</dbReference>
<dbReference type="EMBL" id="BC166553">
    <property type="protein sequence ID" value="AAI66553.1"/>
    <property type="molecule type" value="mRNA"/>
</dbReference>
<dbReference type="RefSeq" id="NP_001100580.1">
    <property type="nucleotide sequence ID" value="NM_001107110.1"/>
</dbReference>
<dbReference type="SMR" id="B2GV72"/>
<dbReference type="FunCoup" id="B2GV72">
    <property type="interactions" value="150"/>
</dbReference>
<dbReference type="STRING" id="10116.ENSRNOP00000002310"/>
<dbReference type="iPTMnet" id="B2GV72"/>
<dbReference type="PhosphoSitePlus" id="B2GV72"/>
<dbReference type="jPOST" id="B2GV72"/>
<dbReference type="PaxDb" id="10116-ENSRNOP00000002310"/>
<dbReference type="PeptideAtlas" id="B2GV72"/>
<dbReference type="Ensembl" id="ENSRNOT00000002310.7">
    <property type="protein sequence ID" value="ENSRNOP00000002310.4"/>
    <property type="gene ID" value="ENSRNOG00000001701.7"/>
</dbReference>
<dbReference type="GeneID" id="304078"/>
<dbReference type="KEGG" id="rno:304078"/>
<dbReference type="UCSC" id="RGD:1309728">
    <property type="organism name" value="rat"/>
</dbReference>
<dbReference type="AGR" id="RGD:1309728"/>
<dbReference type="CTD" id="874"/>
<dbReference type="RGD" id="1309728">
    <property type="gene designation" value="Cbr3"/>
</dbReference>
<dbReference type="eggNOG" id="KOG1208">
    <property type="taxonomic scope" value="Eukaryota"/>
</dbReference>
<dbReference type="GeneTree" id="ENSGT00940000162541"/>
<dbReference type="HOGENOM" id="CLU_010194_9_0_1"/>
<dbReference type="InParanoid" id="B2GV72"/>
<dbReference type="OMA" id="QKKFRCE"/>
<dbReference type="OrthoDB" id="13425at9989"/>
<dbReference type="PhylomeDB" id="B2GV72"/>
<dbReference type="TreeFam" id="TF329359"/>
<dbReference type="BRENDA" id="1.1.1.184">
    <property type="organism ID" value="5301"/>
</dbReference>
<dbReference type="Reactome" id="R-RNO-211945">
    <property type="pathway name" value="Phase I - Functionalization of compounds"/>
</dbReference>
<dbReference type="PRO" id="PR:B2GV72"/>
<dbReference type="Proteomes" id="UP000002494">
    <property type="component" value="Chromosome 11"/>
</dbReference>
<dbReference type="Proteomes" id="UP000234681">
    <property type="component" value="Chromosome 11"/>
</dbReference>
<dbReference type="Bgee" id="ENSRNOG00000001701">
    <property type="expression patterns" value="Expressed in stomach and 19 other cell types or tissues"/>
</dbReference>
<dbReference type="GO" id="GO:0005829">
    <property type="term" value="C:cytosol"/>
    <property type="evidence" value="ECO:0000250"/>
    <property type="project" value="UniProtKB"/>
</dbReference>
<dbReference type="GO" id="GO:0005654">
    <property type="term" value="C:nucleoplasm"/>
    <property type="evidence" value="ECO:0007669"/>
    <property type="project" value="Ensembl"/>
</dbReference>
<dbReference type="GO" id="GO:0000253">
    <property type="term" value="F:3-beta-hydroxysteroid 3-dehydrogenase (NADP+) activity"/>
    <property type="evidence" value="ECO:0000314"/>
    <property type="project" value="RGD"/>
</dbReference>
<dbReference type="GO" id="GO:0004090">
    <property type="term" value="F:carbonyl reductase (NADPH) activity"/>
    <property type="evidence" value="ECO:0000314"/>
    <property type="project" value="RGD"/>
</dbReference>
<dbReference type="GO" id="GO:0070402">
    <property type="term" value="F:NADPH binding"/>
    <property type="evidence" value="ECO:0000266"/>
    <property type="project" value="RGD"/>
</dbReference>
<dbReference type="GO" id="GO:0008753">
    <property type="term" value="F:NADPH dehydrogenase (quinone) activity"/>
    <property type="evidence" value="ECO:0000250"/>
    <property type="project" value="UniProtKB"/>
</dbReference>
<dbReference type="GO" id="GO:0050890">
    <property type="term" value="P:cognition"/>
    <property type="evidence" value="ECO:0000266"/>
    <property type="project" value="RGD"/>
</dbReference>
<dbReference type="GO" id="GO:0042376">
    <property type="term" value="P:phylloquinone catabolic process"/>
    <property type="evidence" value="ECO:0000314"/>
    <property type="project" value="RGD"/>
</dbReference>
<dbReference type="CDD" id="cd05324">
    <property type="entry name" value="carb_red_PTCR-like_SDR_c"/>
    <property type="match status" value="1"/>
</dbReference>
<dbReference type="FunFam" id="3.40.50.720:FF:000164">
    <property type="entry name" value="Carbonyl reductase [NADPH] 1"/>
    <property type="match status" value="1"/>
</dbReference>
<dbReference type="Gene3D" id="3.40.50.720">
    <property type="entry name" value="NAD(P)-binding Rossmann-like Domain"/>
    <property type="match status" value="1"/>
</dbReference>
<dbReference type="InterPro" id="IPR045313">
    <property type="entry name" value="CBR1-like"/>
</dbReference>
<dbReference type="InterPro" id="IPR036291">
    <property type="entry name" value="NAD(P)-bd_dom_sf"/>
</dbReference>
<dbReference type="InterPro" id="IPR020904">
    <property type="entry name" value="Sc_DH/Rdtase_CS"/>
</dbReference>
<dbReference type="InterPro" id="IPR002347">
    <property type="entry name" value="SDR_fam"/>
</dbReference>
<dbReference type="PANTHER" id="PTHR43963">
    <property type="entry name" value="CARBONYL REDUCTASE 1-RELATED"/>
    <property type="match status" value="1"/>
</dbReference>
<dbReference type="PANTHER" id="PTHR43963:SF3">
    <property type="entry name" value="CARBONYL REDUCTASE [NADPH] 3"/>
    <property type="match status" value="1"/>
</dbReference>
<dbReference type="Pfam" id="PF00106">
    <property type="entry name" value="adh_short"/>
    <property type="match status" value="2"/>
</dbReference>
<dbReference type="PRINTS" id="PR00081">
    <property type="entry name" value="GDHRDH"/>
</dbReference>
<dbReference type="PRINTS" id="PR00080">
    <property type="entry name" value="SDRFAMILY"/>
</dbReference>
<dbReference type="SUPFAM" id="SSF51735">
    <property type="entry name" value="NAD(P)-binding Rossmann-fold domains"/>
    <property type="match status" value="1"/>
</dbReference>
<dbReference type="PROSITE" id="PS00061">
    <property type="entry name" value="ADH_SHORT"/>
    <property type="match status" value="1"/>
</dbReference>
<feature type="initiator methionine" description="Removed" evidence="3">
    <location>
        <position position="1"/>
    </location>
</feature>
<feature type="chain" id="PRO_0000455424" description="Carbonyl reductase [NADPH] 3" evidence="5">
    <location>
        <begin position="2"/>
        <end position="277"/>
    </location>
</feature>
<feature type="active site" description="Proton acceptor" evidence="6">
    <location>
        <position position="194"/>
    </location>
</feature>
<feature type="binding site" evidence="2">
    <location>
        <begin position="10"/>
        <end position="34"/>
    </location>
    <ligand>
        <name>NADP(+)</name>
        <dbReference type="ChEBI" id="CHEBI:58349"/>
    </ligand>
</feature>
<feature type="binding site" evidence="2">
    <location>
        <begin position="38"/>
        <end position="42"/>
    </location>
    <ligand>
        <name>NADP(+)</name>
        <dbReference type="ChEBI" id="CHEBI:58349"/>
    </ligand>
</feature>
<feature type="binding site" evidence="2">
    <location>
        <begin position="63"/>
        <end position="64"/>
    </location>
    <ligand>
        <name>NADP(+)</name>
        <dbReference type="ChEBI" id="CHEBI:58349"/>
    </ligand>
</feature>
<feature type="binding site" evidence="2">
    <location>
        <position position="90"/>
    </location>
    <ligand>
        <name>NADP(+)</name>
        <dbReference type="ChEBI" id="CHEBI:58349"/>
    </ligand>
</feature>
<feature type="binding site" evidence="1">
    <location>
        <position position="140"/>
    </location>
    <ligand>
        <name>substrate</name>
    </ligand>
</feature>
<feature type="binding site" evidence="2">
    <location>
        <begin position="194"/>
        <end position="198"/>
    </location>
    <ligand>
        <name>NADP(+)</name>
        <dbReference type="ChEBI" id="CHEBI:58349"/>
    </ligand>
</feature>
<feature type="modified residue" description="N-acetylserine" evidence="3">
    <location>
        <position position="2"/>
    </location>
</feature>
<feature type="modified residue" description="Phosphoserine" evidence="4">
    <location>
        <position position="30"/>
    </location>
</feature>
<feature type="mutagenesis site" description="Does not affect carbonyl reductase (NADPH) activity." evidence="7">
    <original>W</original>
    <variation>P</variation>
    <location>
        <position position="230"/>
    </location>
</feature>
<organism>
    <name type="scientific">Rattus norvegicus</name>
    <name type="common">Rat</name>
    <dbReference type="NCBI Taxonomy" id="10116"/>
    <lineage>
        <taxon>Eukaryota</taxon>
        <taxon>Metazoa</taxon>
        <taxon>Chordata</taxon>
        <taxon>Craniata</taxon>
        <taxon>Vertebrata</taxon>
        <taxon>Euteleostomi</taxon>
        <taxon>Mammalia</taxon>
        <taxon>Eutheria</taxon>
        <taxon>Euarchontoglires</taxon>
        <taxon>Glires</taxon>
        <taxon>Rodentia</taxon>
        <taxon>Myomorpha</taxon>
        <taxon>Muroidea</taxon>
        <taxon>Muridae</taxon>
        <taxon>Murinae</taxon>
        <taxon>Rattus</taxon>
    </lineage>
</organism>
<accession>B2GV72</accession>
<evidence type="ECO:0000250" key="1"/>
<evidence type="ECO:0000250" key="2">
    <source>
        <dbReference type="UniProtKB" id="O75828"/>
    </source>
</evidence>
<evidence type="ECO:0000250" key="3">
    <source>
        <dbReference type="UniProtKB" id="P16152"/>
    </source>
</evidence>
<evidence type="ECO:0000250" key="4">
    <source>
        <dbReference type="UniProtKB" id="P48758"/>
    </source>
</evidence>
<evidence type="ECO:0000250" key="5">
    <source>
        <dbReference type="UniProtKB" id="Q8K354"/>
    </source>
</evidence>
<evidence type="ECO:0000255" key="6">
    <source>
        <dbReference type="PROSITE-ProRule" id="PRU10001"/>
    </source>
</evidence>
<evidence type="ECO:0000269" key="7">
    <source>
    </source>
</evidence>
<evidence type="ECO:0000303" key="8">
    <source>
    </source>
</evidence>
<evidence type="ECO:0000305" key="9"/>
<evidence type="ECO:0000312" key="10">
    <source>
        <dbReference type="RGD" id="1309728"/>
    </source>
</evidence>
<gene>
    <name evidence="10" type="primary">Cbr3</name>
</gene>
<comment type="function">
    <text evidence="2 7">Catalyzes the NADPH-dependent reduction of carbonyl compounds to their corresponding alcohols. Has low NADPH-dependent oxidoreductase activity (PubMed:18983987). Acts on several orthoquinones, as well as on non-quinone compounds, such as isatin or on the anticancer drug oracin. Best substrates for CBR3 is 1,2- naphthoquinone, hence could play a role in protection against cytotoxicity of exogenous quinones. Exerts activity toward ortho-quinones but not paraquinones. No endogenous substrate for CBR3 except isatin has been identified (By similarity).</text>
</comment>
<comment type="catalytic activity">
    <reaction evidence="7">
        <text>a secondary alcohol + NADP(+) = a ketone + NADPH + H(+)</text>
        <dbReference type="Rhea" id="RHEA:19257"/>
        <dbReference type="ChEBI" id="CHEBI:15378"/>
        <dbReference type="ChEBI" id="CHEBI:17087"/>
        <dbReference type="ChEBI" id="CHEBI:35681"/>
        <dbReference type="ChEBI" id="CHEBI:57783"/>
        <dbReference type="ChEBI" id="CHEBI:58349"/>
        <dbReference type="EC" id="1.1.1.184"/>
    </reaction>
    <physiologicalReaction direction="right-to-left" evidence="2">
        <dbReference type="Rhea" id="RHEA:19259"/>
    </physiologicalReaction>
</comment>
<comment type="catalytic activity">
    <reaction evidence="2">
        <text>a quinone + NADPH + H(+) = a quinol + NADP(+)</text>
        <dbReference type="Rhea" id="RHEA:46164"/>
        <dbReference type="ChEBI" id="CHEBI:15378"/>
        <dbReference type="ChEBI" id="CHEBI:24646"/>
        <dbReference type="ChEBI" id="CHEBI:57783"/>
        <dbReference type="ChEBI" id="CHEBI:58349"/>
        <dbReference type="ChEBI" id="CHEBI:132124"/>
        <dbReference type="EC" id="1.6.5.10"/>
    </reaction>
    <physiologicalReaction direction="left-to-right" evidence="2">
        <dbReference type="Rhea" id="RHEA:46165"/>
    </physiologicalReaction>
</comment>
<comment type="biophysicochemical properties">
    <kinetics>
        <KM evidence="7">1.5 nM for 4-benzoylpyridine</KM>
        <text evidence="7">kcat is 14 min(-1) with 4-benzoylpyridine as substrate (PubMed:18983987). kcat is 0.030 min(-1) with menadione as substrate (PubMed:18983987).</text>
    </kinetics>
</comment>
<comment type="subcellular location">
    <subcellularLocation>
        <location evidence="2">Cytoplasm</location>
    </subcellularLocation>
</comment>
<comment type="similarity">
    <text evidence="9">Belongs to the short-chain dehydrogenases/reductases (SDR) family.</text>
</comment>
<comment type="caution">
    <text evidence="2 7">There are conflicting results on the ability of CBR3 to metabolize menadione. Although menadione was originally reported as a good substrate of CBR3 (By similarity). Results of later studies showed that CBR3 possesses very low or no activity toward menadione (PubMed:18983987).</text>
</comment>
<name>CRB3_RAT</name>
<sequence>MSSCSRVALVTGANKGIGFAITRDLCRKFSGDVVLTARDEARGRAAVKQLQAEGLSPRFHQLDIDNPQSIRALRDFLRKEYGGLNVLVNNAGIAFRMDDPTPFDVQAEVTLKTNFFATRNVCTELLPIMKPHGRVVNVSSLQGLKALENCSEDLQERFRCDTLTEGDLVDLMKKFVEDTKNEVHEREGWPDSAYGVSKLGVTVLTRILARQLDEKRKADRILLNACCPGWVKTDMARDQGSRTVEEGAETPVYLALLPPDATEPHGQLVRDKVVQTW</sequence>